<keyword id="KW-0025">Alternative splicing</keyword>
<keyword id="KW-0175">Coiled coil</keyword>
<keyword id="KW-0238">DNA-binding</keyword>
<keyword id="KW-0287">Flowering</keyword>
<keyword id="KW-0539">Nucleus</keyword>
<keyword id="KW-1185">Reference proteome</keyword>
<keyword id="KW-0678">Repressor</keyword>
<keyword id="KW-0804">Transcription</keyword>
<keyword id="KW-0805">Transcription regulation</keyword>
<proteinExistence type="evidence at protein level"/>
<comment type="function">
    <text evidence="4 5 6">Transcriptional repressor that binds to the motif 5'-(C/T)A(C/A)G-3' in the promoter of target genes (PubMed:25578968). Also binds to the 5'-CTTGNNNNNCAAG-3' consensus sequence in chromatin (PubMed:26617990). Can bind to the mitochondrial dysfunction motif (MDM) present in the upstream regions of mitochondrial dysfunction stimulon (MDS) genes involved in mitochondrial retrograde regulation (MRR) (PubMed:24045019). Together with NAC051/NAC052 and JMJ14, regulates gene expression and flowering time by associating with the histone demethylase JMJ14, probably by the promotion of RNA-mediated gene silencing (PubMed:25578968, PubMed:26617990).</text>
</comment>
<comment type="subunit">
    <text evidence="5 6">Interacts with JMJ14 and NAC052.</text>
</comment>
<comment type="interaction">
    <interactant intactId="EBI-4428214">
        <id>Q9SQX9</id>
    </interactant>
    <interactant intactId="EBI-15204316">
        <id>Q9SGP3</id>
        <label>AGL58</label>
    </interactant>
    <organismsDiffer>false</organismsDiffer>
    <experiments>3</experiments>
</comment>
<comment type="interaction">
    <interactant intactId="EBI-4428214">
        <id>Q9SQX9</id>
    </interactant>
    <interactant intactId="EBI-15203222">
        <id>Q8LCT6</id>
        <label>At1g24210</label>
    </interactant>
    <organismsDiffer>false</organismsDiffer>
    <experiments>3</experiments>
</comment>
<comment type="interaction">
    <interactant intactId="EBI-4428214">
        <id>Q9SQX9</id>
    </interactant>
    <interactant intactId="EBI-15196959">
        <id>Q9LFQ1</id>
        <label>At5g15040</label>
    </interactant>
    <organismsDiffer>false</organismsDiffer>
    <experiments>3</experiments>
</comment>
<comment type="interaction">
    <interactant intactId="EBI-4428214">
        <id>Q9SQX9</id>
    </interactant>
    <interactant intactId="EBI-4429826">
        <id>Q8GUI6</id>
        <label>JMJ14</label>
    </interactant>
    <organismsDiffer>false</organismsDiffer>
    <experiments>4</experiments>
</comment>
<comment type="interaction">
    <interactant intactId="EBI-4428214">
        <id>Q9SQX9</id>
    </interactant>
    <interactant intactId="EBI-15196807">
        <id>Q9SN22</id>
        <label>SCL32</label>
    </interactant>
    <organismsDiffer>false</organismsDiffer>
    <experiments>3</experiments>
</comment>
<comment type="subcellular location">
    <subcellularLocation>
        <location evidence="2 6">Nucleus</location>
    </subcellularLocation>
</comment>
<comment type="alternative products">
    <event type="alternative splicing"/>
    <isoform>
        <id>Q9SQX9-1</id>
        <name>1</name>
        <sequence type="displayed"/>
    </isoform>
    <isoform>
        <id>Q9SQX9-2</id>
        <name>2</name>
        <sequence type="described" ref="VSP_059198"/>
    </isoform>
</comment>
<comment type="tissue specificity">
    <text evidence="5">Mostly expressed in floral organs, and, at low levels, in other organs.</text>
</comment>
<comment type="domain">
    <text evidence="2">The NAC domain includes a DNA binding domain and a dimerization domain.</text>
</comment>
<comment type="disruption phenotype">
    <text evidence="5 6">The double mutant nac050 nac052 exhibits early flowering and increased H3K4 methylation on specific genes, thus leading to their derepression (PubMed:25578968). Impaired RNA-mediated gene silencing (PubMed:26617990).</text>
</comment>
<gene>
    <name evidence="7" type="primary">NAC050</name>
    <name evidence="7" type="synonym">NAC50</name>
    <name evidence="8" type="ordered locus">At3g10480</name>
    <name evidence="10" type="ORF">F13M14.24</name>
    <name evidence="9" type="ORF">F18K10.5</name>
</gene>
<accession>Q9SQX9</accession>
<accession>F4J3S8</accession>
<evidence type="ECO:0000255" key="1"/>
<evidence type="ECO:0000255" key="2">
    <source>
        <dbReference type="PROSITE-ProRule" id="PRU00353"/>
    </source>
</evidence>
<evidence type="ECO:0000256" key="3">
    <source>
        <dbReference type="SAM" id="MobiDB-lite"/>
    </source>
</evidence>
<evidence type="ECO:0000269" key="4">
    <source>
    </source>
</evidence>
<evidence type="ECO:0000269" key="5">
    <source>
    </source>
</evidence>
<evidence type="ECO:0000269" key="6">
    <source>
    </source>
</evidence>
<evidence type="ECO:0000303" key="7">
    <source>
    </source>
</evidence>
<evidence type="ECO:0000312" key="8">
    <source>
        <dbReference type="Araport" id="AT3G10480"/>
    </source>
</evidence>
<evidence type="ECO:0000312" key="9">
    <source>
        <dbReference type="EMBL" id="AAF76349.1"/>
    </source>
</evidence>
<evidence type="ECO:0000312" key="10">
    <source>
        <dbReference type="EMBL" id="AAG51394.1"/>
    </source>
</evidence>
<reference key="1">
    <citation type="journal article" date="2000" name="Nature">
        <title>Sequence and analysis of chromosome 3 of the plant Arabidopsis thaliana.</title>
        <authorList>
            <person name="Salanoubat M."/>
            <person name="Lemcke K."/>
            <person name="Rieger M."/>
            <person name="Ansorge W."/>
            <person name="Unseld M."/>
            <person name="Fartmann B."/>
            <person name="Valle G."/>
            <person name="Bloecker H."/>
            <person name="Perez-Alonso M."/>
            <person name="Obermaier B."/>
            <person name="Delseny M."/>
            <person name="Boutry M."/>
            <person name="Grivell L.A."/>
            <person name="Mache R."/>
            <person name="Puigdomenech P."/>
            <person name="De Simone V."/>
            <person name="Choisne N."/>
            <person name="Artiguenave F."/>
            <person name="Robert C."/>
            <person name="Brottier P."/>
            <person name="Wincker P."/>
            <person name="Cattolico L."/>
            <person name="Weissenbach J."/>
            <person name="Saurin W."/>
            <person name="Quetier F."/>
            <person name="Schaefer M."/>
            <person name="Mueller-Auer S."/>
            <person name="Gabel C."/>
            <person name="Fuchs M."/>
            <person name="Benes V."/>
            <person name="Wurmbach E."/>
            <person name="Drzonek H."/>
            <person name="Erfle H."/>
            <person name="Jordan N."/>
            <person name="Bangert S."/>
            <person name="Wiedelmann R."/>
            <person name="Kranz H."/>
            <person name="Voss H."/>
            <person name="Holland R."/>
            <person name="Brandt P."/>
            <person name="Nyakatura G."/>
            <person name="Vezzi A."/>
            <person name="D'Angelo M."/>
            <person name="Pallavicini A."/>
            <person name="Toppo S."/>
            <person name="Simionati B."/>
            <person name="Conrad A."/>
            <person name="Hornischer K."/>
            <person name="Kauer G."/>
            <person name="Loehnert T.-H."/>
            <person name="Nordsiek G."/>
            <person name="Reichelt J."/>
            <person name="Scharfe M."/>
            <person name="Schoen O."/>
            <person name="Bargues M."/>
            <person name="Terol J."/>
            <person name="Climent J."/>
            <person name="Navarro P."/>
            <person name="Collado C."/>
            <person name="Perez-Perez A."/>
            <person name="Ottenwaelder B."/>
            <person name="Duchemin D."/>
            <person name="Cooke R."/>
            <person name="Laudie M."/>
            <person name="Berger-Llauro C."/>
            <person name="Purnelle B."/>
            <person name="Masuy D."/>
            <person name="de Haan M."/>
            <person name="Maarse A.C."/>
            <person name="Alcaraz J.-P."/>
            <person name="Cottet A."/>
            <person name="Casacuberta E."/>
            <person name="Monfort A."/>
            <person name="Argiriou A."/>
            <person name="Flores M."/>
            <person name="Liguori R."/>
            <person name="Vitale D."/>
            <person name="Mannhaupt G."/>
            <person name="Haase D."/>
            <person name="Schoof H."/>
            <person name="Rudd S."/>
            <person name="Zaccaria P."/>
            <person name="Mewes H.-W."/>
            <person name="Mayer K.F.X."/>
            <person name="Kaul S."/>
            <person name="Town C.D."/>
            <person name="Koo H.L."/>
            <person name="Tallon L.J."/>
            <person name="Jenkins J."/>
            <person name="Rooney T."/>
            <person name="Rizzo M."/>
            <person name="Walts A."/>
            <person name="Utterback T."/>
            <person name="Fujii C.Y."/>
            <person name="Shea T.P."/>
            <person name="Creasy T.H."/>
            <person name="Haas B."/>
            <person name="Maiti R."/>
            <person name="Wu D."/>
            <person name="Peterson J."/>
            <person name="Van Aken S."/>
            <person name="Pai G."/>
            <person name="Militscher J."/>
            <person name="Sellers P."/>
            <person name="Gill J.E."/>
            <person name="Feldblyum T.V."/>
            <person name="Preuss D."/>
            <person name="Lin X."/>
            <person name="Nierman W.C."/>
            <person name="Salzberg S.L."/>
            <person name="White O."/>
            <person name="Venter J.C."/>
            <person name="Fraser C.M."/>
            <person name="Kaneko T."/>
            <person name="Nakamura Y."/>
            <person name="Sato S."/>
            <person name="Kato T."/>
            <person name="Asamizu E."/>
            <person name="Sasamoto S."/>
            <person name="Kimura T."/>
            <person name="Idesawa K."/>
            <person name="Kawashima K."/>
            <person name="Kishida Y."/>
            <person name="Kiyokawa C."/>
            <person name="Kohara M."/>
            <person name="Matsumoto M."/>
            <person name="Matsuno A."/>
            <person name="Muraki A."/>
            <person name="Nakayama S."/>
            <person name="Nakazaki N."/>
            <person name="Shinpo S."/>
            <person name="Takeuchi C."/>
            <person name="Wada T."/>
            <person name="Watanabe A."/>
            <person name="Yamada M."/>
            <person name="Yasuda M."/>
            <person name="Tabata S."/>
        </authorList>
    </citation>
    <scope>NUCLEOTIDE SEQUENCE [LARGE SCALE GENOMIC DNA]</scope>
    <source>
        <strain>cv. Columbia</strain>
    </source>
</reference>
<reference key="2">
    <citation type="journal article" date="2017" name="Plant J.">
        <title>Araport11: a complete reannotation of the Arabidopsis thaliana reference genome.</title>
        <authorList>
            <person name="Cheng C.Y."/>
            <person name="Krishnakumar V."/>
            <person name="Chan A.P."/>
            <person name="Thibaud-Nissen F."/>
            <person name="Schobel S."/>
            <person name="Town C.D."/>
        </authorList>
    </citation>
    <scope>GENOME REANNOTATION</scope>
    <source>
        <strain>cv. Columbia</strain>
    </source>
</reference>
<reference key="3">
    <citation type="journal article" date="2003" name="Science">
        <title>Empirical analysis of transcriptional activity in the Arabidopsis genome.</title>
        <authorList>
            <person name="Yamada K."/>
            <person name="Lim J."/>
            <person name="Dale J.M."/>
            <person name="Chen H."/>
            <person name="Shinn P."/>
            <person name="Palm C.J."/>
            <person name="Southwick A.M."/>
            <person name="Wu H.C."/>
            <person name="Kim C.J."/>
            <person name="Nguyen M."/>
            <person name="Pham P.K."/>
            <person name="Cheuk R.F."/>
            <person name="Karlin-Newmann G."/>
            <person name="Liu S.X."/>
            <person name="Lam B."/>
            <person name="Sakano H."/>
            <person name="Wu T."/>
            <person name="Yu G."/>
            <person name="Miranda M."/>
            <person name="Quach H.L."/>
            <person name="Tripp M."/>
            <person name="Chang C.H."/>
            <person name="Lee J.M."/>
            <person name="Toriumi M.J."/>
            <person name="Chan M.M."/>
            <person name="Tang C.C."/>
            <person name="Onodera C.S."/>
            <person name="Deng J.M."/>
            <person name="Akiyama K."/>
            <person name="Ansari Y."/>
            <person name="Arakawa T."/>
            <person name="Banh J."/>
            <person name="Banno F."/>
            <person name="Bowser L."/>
            <person name="Brooks S.Y."/>
            <person name="Carninci P."/>
            <person name="Chao Q."/>
            <person name="Choy N."/>
            <person name="Enju A."/>
            <person name="Goldsmith A.D."/>
            <person name="Gurjal M."/>
            <person name="Hansen N.F."/>
            <person name="Hayashizaki Y."/>
            <person name="Johnson-Hopson C."/>
            <person name="Hsuan V.W."/>
            <person name="Iida K."/>
            <person name="Karnes M."/>
            <person name="Khan S."/>
            <person name="Koesema E."/>
            <person name="Ishida J."/>
            <person name="Jiang P.X."/>
            <person name="Jones T."/>
            <person name="Kawai J."/>
            <person name="Kamiya A."/>
            <person name="Meyers C."/>
            <person name="Nakajima M."/>
            <person name="Narusaka M."/>
            <person name="Seki M."/>
            <person name="Sakurai T."/>
            <person name="Satou M."/>
            <person name="Tamse R."/>
            <person name="Vaysberg M."/>
            <person name="Wallender E.K."/>
            <person name="Wong C."/>
            <person name="Yamamura Y."/>
            <person name="Yuan S."/>
            <person name="Shinozaki K."/>
            <person name="Davis R.W."/>
            <person name="Theologis A."/>
            <person name="Ecker J.R."/>
        </authorList>
    </citation>
    <scope>NUCLEOTIDE SEQUENCE [LARGE SCALE MRNA] (ISOFORM 1)</scope>
    <source>
        <strain>cv. Columbia</strain>
    </source>
</reference>
<reference key="4">
    <citation type="journal article" date="2003" name="DNA Res.">
        <title>Comprehensive analysis of NAC family genes in Oryza sativa and Arabidopsis thaliana.</title>
        <authorList>
            <person name="Ooka H."/>
            <person name="Satoh K."/>
            <person name="Doi K."/>
            <person name="Nagata T."/>
            <person name="Otomo Y."/>
            <person name="Murakami K."/>
            <person name="Matsubara K."/>
            <person name="Osato N."/>
            <person name="Kawai J."/>
            <person name="Carninci P."/>
            <person name="Hayashizaki Y."/>
            <person name="Suzuki K."/>
            <person name="Kojima K."/>
            <person name="Takahara Y."/>
            <person name="Yamamoto K."/>
            <person name="Kikuchi S."/>
        </authorList>
    </citation>
    <scope>GENE FAMILY</scope>
    <scope>NOMENCLATURE</scope>
</reference>
<reference key="5">
    <citation type="journal article" date="2013" name="Plant Cell">
        <title>The membrane-bound NAC transcription factor ANAC013 functions in mitochondrial retrograde regulation of the oxidative stress response in Arabidopsis.</title>
        <authorList>
            <person name="De Clercq I."/>
            <person name="Vermeirssen V."/>
            <person name="Van Aken O."/>
            <person name="Vandepoele K."/>
            <person name="Murcha M.W."/>
            <person name="Law S.R."/>
            <person name="Inze A."/>
            <person name="Ng S."/>
            <person name="Ivanova A."/>
            <person name="Rombaut D."/>
            <person name="van de Cotte B."/>
            <person name="Jaspers P."/>
            <person name="Van de Peer Y."/>
            <person name="Kangasjaervi J."/>
            <person name="Whelan J."/>
            <person name="Van Breusegem F."/>
        </authorList>
    </citation>
    <scope>FUNCTION</scope>
    <scope>GENE FAMILY</scope>
</reference>
<reference key="6">
    <citation type="journal article" date="2015" name="Cell Discov.">
        <title>C-terminal domains of a histone demethylase interact with a pair of transcription factors and mediate specific chromatin association.</title>
        <authorList>
            <person name="Zhang S."/>
            <person name="Zhou B."/>
            <person name="Kang Y."/>
            <person name="Cui X."/>
            <person name="Liu A."/>
            <person name="Deleris A."/>
            <person name="Greenberg M.V.C."/>
            <person name="Cui X."/>
            <person name="Qiu Q."/>
            <person name="Lu F."/>
            <person name="Wohlschlegel J.A."/>
            <person name="Jacobsen S.E."/>
            <person name="Cao X."/>
        </authorList>
    </citation>
    <scope>FUNCTION</scope>
    <scope>DISRUPTION PHENOTYPE</scope>
    <scope>INTERACTION WITH JMJ14</scope>
    <scope>SUBCELLULAR LOCATION</scope>
    <source>
        <strain>cv. Columbia</strain>
    </source>
</reference>
<reference key="7">
    <citation type="journal article" date="2015" name="Nucleic Acids Res.">
        <title>Two novel NAC transcription factors regulate gene expression and flowering time by associating with the histone demethylase JMJ14.</title>
        <authorList>
            <person name="Ning Y.-Q."/>
            <person name="Ma Z.-Y."/>
            <person name="Huang H.-W."/>
            <person name="Mo H."/>
            <person name="Zhao T.-T."/>
            <person name="Li L."/>
            <person name="Cai T."/>
            <person name="Chen S."/>
            <person name="Ma L."/>
            <person name="He X.-J."/>
        </authorList>
    </citation>
    <scope>FUNCTION</scope>
    <scope>DISRUPTION PHENOTYPE</scope>
    <scope>INTERACTION WITH JMJ14 AND NAC052</scope>
    <scope>TISSUE SPECIFICITY</scope>
    <scope>IDENTIFICATION BY MASS SPECTROMETRY</scope>
    <source>
        <strain>cv. Columbia</strain>
    </source>
</reference>
<name>NAC50_ARATH</name>
<feature type="chain" id="PRO_0000442194" description="NAC domain containing protein 50">
    <location>
        <begin position="1"/>
        <end position="447"/>
    </location>
</feature>
<feature type="domain" description="NAC" evidence="2">
    <location>
        <begin position="27"/>
        <end position="178"/>
    </location>
</feature>
<feature type="DNA-binding region" evidence="2">
    <location>
        <begin position="126"/>
        <end position="184"/>
    </location>
</feature>
<feature type="region of interest" description="Disordered" evidence="3">
    <location>
        <begin position="1"/>
        <end position="21"/>
    </location>
</feature>
<feature type="region of interest" description="Disordered" evidence="3">
    <location>
        <begin position="246"/>
        <end position="303"/>
    </location>
</feature>
<feature type="region of interest" description="Disordered" evidence="3">
    <location>
        <begin position="371"/>
        <end position="392"/>
    </location>
</feature>
<feature type="coiled-coil region" evidence="1">
    <location>
        <begin position="392"/>
        <end position="447"/>
    </location>
</feature>
<feature type="compositionally biased region" description="Basic and acidic residues" evidence="3">
    <location>
        <begin position="281"/>
        <end position="293"/>
    </location>
</feature>
<feature type="splice variant" id="VSP_059198" description="In isoform 2.">
    <location>
        <position position="167"/>
    </location>
</feature>
<organism>
    <name type="scientific">Arabidopsis thaliana</name>
    <name type="common">Mouse-ear cress</name>
    <dbReference type="NCBI Taxonomy" id="3702"/>
    <lineage>
        <taxon>Eukaryota</taxon>
        <taxon>Viridiplantae</taxon>
        <taxon>Streptophyta</taxon>
        <taxon>Embryophyta</taxon>
        <taxon>Tracheophyta</taxon>
        <taxon>Spermatophyta</taxon>
        <taxon>Magnoliopsida</taxon>
        <taxon>eudicotyledons</taxon>
        <taxon>Gunneridae</taxon>
        <taxon>Pentapetalae</taxon>
        <taxon>rosids</taxon>
        <taxon>malvids</taxon>
        <taxon>Brassicales</taxon>
        <taxon>Brassicaceae</taxon>
        <taxon>Camelineae</taxon>
        <taxon>Arabidopsis</taxon>
    </lineage>
</organism>
<sequence length="447" mass="50355">MGRESLAVVSSPPSATAPSTAVSATSLAPGFRFHPTDEELVSYYLKRKVLGKPVRFDAIGEVDIYKHEPWDLAVFSKLKTRDQEWYFFSALDKKYGNGARMNRATNKGYWKATGKDREIRRDIQLLGMKKTLVFHSGRAPDGLRTNWVMHEYRLVEYETETNGSLLQDAYVLCRVFHKNNIGPPSGNRYAPFMEEEWADGGGALIPGIDVRVRVEALPQANGNNQMDQEMHSASKDLININELPRDATPMDIEPNQQNHHESAFKPQESNNHSGYEEDEDTLKREHAEEDERPPSLCILNKEAPLPLLQYKRRRQNESNNNSSRNTQDHCSSTITTVDNTTTLISSSAAAATNTAISALLEFSLMGISDKKENQQKEETSPPSPIASPEEKVNDLQKEVHQMSVERETFKLEMMSAEAMISILQSRIDALRQENEELKKKNASGQAS</sequence>
<protein>
    <recommendedName>
        <fullName evidence="7">NAC domain containing protein 50</fullName>
        <shortName evidence="7">ANAC050</shortName>
    </recommendedName>
</protein>
<dbReference type="EMBL" id="AC011560">
    <property type="protein sequence ID" value="AAG51394.1"/>
    <property type="molecule type" value="Genomic_DNA"/>
</dbReference>
<dbReference type="EMBL" id="AC013428">
    <property type="protein sequence ID" value="AAF76349.1"/>
    <property type="molecule type" value="Genomic_DNA"/>
</dbReference>
<dbReference type="EMBL" id="CP002686">
    <property type="protein sequence ID" value="AEE74912.1"/>
    <property type="molecule type" value="Genomic_DNA"/>
</dbReference>
<dbReference type="EMBL" id="CP002686">
    <property type="protein sequence ID" value="AEE74913.1"/>
    <property type="molecule type" value="Genomic_DNA"/>
</dbReference>
<dbReference type="EMBL" id="AY059795">
    <property type="protein sequence ID" value="AAL24143.1"/>
    <property type="molecule type" value="mRNA"/>
</dbReference>
<dbReference type="EMBL" id="AY091262">
    <property type="protein sequence ID" value="AAM14201.1"/>
    <property type="molecule type" value="mRNA"/>
</dbReference>
<dbReference type="RefSeq" id="NP_566374.1">
    <molecule id="Q9SQX9-1"/>
    <property type="nucleotide sequence ID" value="NM_111883.5"/>
</dbReference>
<dbReference type="RefSeq" id="NP_974272.1">
    <molecule id="Q9SQX9-2"/>
    <property type="nucleotide sequence ID" value="NM_202543.2"/>
</dbReference>
<dbReference type="SMR" id="Q9SQX9"/>
<dbReference type="FunCoup" id="Q9SQX9">
    <property type="interactions" value="876"/>
</dbReference>
<dbReference type="IntAct" id="Q9SQX9">
    <property type="interactions" value="17"/>
</dbReference>
<dbReference type="STRING" id="3702.Q9SQX9"/>
<dbReference type="iPTMnet" id="Q9SQX9"/>
<dbReference type="ProteomicsDB" id="251031">
    <molecule id="Q9SQX9-1"/>
</dbReference>
<dbReference type="EnsemblPlants" id="AT3G10480.1">
    <molecule id="Q9SQX9-1"/>
    <property type="protein sequence ID" value="AT3G10480.1"/>
    <property type="gene ID" value="AT3G10480"/>
</dbReference>
<dbReference type="EnsemblPlants" id="AT3G10480.2">
    <molecule id="Q9SQX9-2"/>
    <property type="protein sequence ID" value="AT3G10480.2"/>
    <property type="gene ID" value="AT3G10480"/>
</dbReference>
<dbReference type="GeneID" id="820212"/>
<dbReference type="Gramene" id="AT3G10480.1">
    <molecule id="Q9SQX9-1"/>
    <property type="protein sequence ID" value="AT3G10480.1"/>
    <property type="gene ID" value="AT3G10480"/>
</dbReference>
<dbReference type="Gramene" id="AT3G10480.2">
    <molecule id="Q9SQX9-2"/>
    <property type="protein sequence ID" value="AT3G10480.2"/>
    <property type="gene ID" value="AT3G10480"/>
</dbReference>
<dbReference type="KEGG" id="ath:AT3G10480"/>
<dbReference type="Araport" id="AT3G10480"/>
<dbReference type="TAIR" id="AT3G10480">
    <property type="gene designation" value="NAC050"/>
</dbReference>
<dbReference type="HOGENOM" id="CLU_035664_13_0_1"/>
<dbReference type="InParanoid" id="Q9SQX9"/>
<dbReference type="OMA" id="QYKRRRH"/>
<dbReference type="OrthoDB" id="645697at2759"/>
<dbReference type="PhylomeDB" id="Q9SQX9"/>
<dbReference type="PRO" id="PR:Q9SQX9"/>
<dbReference type="Proteomes" id="UP000006548">
    <property type="component" value="Chromosome 3"/>
</dbReference>
<dbReference type="ExpressionAtlas" id="Q9SQX9">
    <property type="expression patterns" value="baseline and differential"/>
</dbReference>
<dbReference type="GO" id="GO:0005634">
    <property type="term" value="C:nucleus"/>
    <property type="evidence" value="ECO:0000314"/>
    <property type="project" value="UniProtKB"/>
</dbReference>
<dbReference type="GO" id="GO:0043565">
    <property type="term" value="F:sequence-specific DNA binding"/>
    <property type="evidence" value="ECO:0000314"/>
    <property type="project" value="UniProtKB"/>
</dbReference>
<dbReference type="GO" id="GO:0000976">
    <property type="term" value="F:transcription cis-regulatory region binding"/>
    <property type="evidence" value="ECO:0000314"/>
    <property type="project" value="UniProtKB"/>
</dbReference>
<dbReference type="GO" id="GO:0009908">
    <property type="term" value="P:flower development"/>
    <property type="evidence" value="ECO:0007669"/>
    <property type="project" value="UniProtKB-KW"/>
</dbReference>
<dbReference type="GO" id="GO:0045892">
    <property type="term" value="P:negative regulation of DNA-templated transcription"/>
    <property type="evidence" value="ECO:0000315"/>
    <property type="project" value="UniProtKB"/>
</dbReference>
<dbReference type="GO" id="GO:0045814">
    <property type="term" value="P:negative regulation of gene expression, epigenetic"/>
    <property type="evidence" value="ECO:0000315"/>
    <property type="project" value="UniProtKB"/>
</dbReference>
<dbReference type="GO" id="GO:0000122">
    <property type="term" value="P:negative regulation of transcription by RNA polymerase II"/>
    <property type="evidence" value="ECO:0000314"/>
    <property type="project" value="UniProtKB"/>
</dbReference>
<dbReference type="GO" id="GO:0048573">
    <property type="term" value="P:photoperiodism, flowering"/>
    <property type="evidence" value="ECO:0000315"/>
    <property type="project" value="UniProtKB"/>
</dbReference>
<dbReference type="GO" id="GO:0060966">
    <property type="term" value="P:regulation of gene silencing by regulatory ncRNA"/>
    <property type="evidence" value="ECO:0000315"/>
    <property type="project" value="UniProtKB"/>
</dbReference>
<dbReference type="FunFam" id="2.170.150.80:FF:000002">
    <property type="entry name" value="Nac domain-containing protein 86"/>
    <property type="match status" value="1"/>
</dbReference>
<dbReference type="Gene3D" id="2.170.150.80">
    <property type="entry name" value="NAC domain"/>
    <property type="match status" value="1"/>
</dbReference>
<dbReference type="InterPro" id="IPR003441">
    <property type="entry name" value="NAC-dom"/>
</dbReference>
<dbReference type="InterPro" id="IPR036093">
    <property type="entry name" value="NAC_dom_sf"/>
</dbReference>
<dbReference type="PANTHER" id="PTHR31744:SF210">
    <property type="entry name" value="NAC DOMAIN-CONTAINING PROTEIN 86-LIKE"/>
    <property type="match status" value="1"/>
</dbReference>
<dbReference type="PANTHER" id="PTHR31744">
    <property type="entry name" value="PROTEIN CUP-SHAPED COTYLEDON 2-RELATED"/>
    <property type="match status" value="1"/>
</dbReference>
<dbReference type="Pfam" id="PF02365">
    <property type="entry name" value="NAM"/>
    <property type="match status" value="1"/>
</dbReference>
<dbReference type="SUPFAM" id="SSF101941">
    <property type="entry name" value="NAC domain"/>
    <property type="match status" value="1"/>
</dbReference>
<dbReference type="PROSITE" id="PS51005">
    <property type="entry name" value="NAC"/>
    <property type="match status" value="1"/>
</dbReference>